<name>CYSD_METS4</name>
<keyword id="KW-0067">ATP-binding</keyword>
<keyword id="KW-0547">Nucleotide-binding</keyword>
<keyword id="KW-0548">Nucleotidyltransferase</keyword>
<keyword id="KW-0808">Transferase</keyword>
<feature type="chain" id="PRO_0000340204" description="Sulfate adenylyltransferase subunit 2">
    <location>
        <begin position="1"/>
        <end position="311"/>
    </location>
</feature>
<sequence length="311" mass="35557">MSVALRSFAETSPRLTHLQRLEAESIHIMRETVAETENPVMLYSIGKDSSVLLHLALKAFAPGRLPFPLLHIDTTWKFREMIAFRDRRAKELGLDLLVYTNPDGLARGIGPVSHGSEVHTDVMKTQALRQALDKHRFDAAFGGARRDEEASRAKERVVSLRTAQHRWDPKRQRAEPWHLYNLKKRRGESLRVFPLSNWTELDIWLYIERENIPIVPLYYAAERPVVRREGQLIMVDDARLPLEPGETPELRKVRFRTLGCYPLTGAVESEAATLPEIIGETLAARTSERQGRVIDKDGAGAMERKKQEGYF</sequence>
<evidence type="ECO:0000255" key="1">
    <source>
        <dbReference type="HAMAP-Rule" id="MF_00064"/>
    </source>
</evidence>
<accession>B0U8Y5</accession>
<reference key="1">
    <citation type="submission" date="2008-02" db="EMBL/GenBank/DDBJ databases">
        <title>Complete sequence of chromosome of Methylobacterium sp. 4-46.</title>
        <authorList>
            <consortium name="US DOE Joint Genome Institute"/>
            <person name="Copeland A."/>
            <person name="Lucas S."/>
            <person name="Lapidus A."/>
            <person name="Glavina del Rio T."/>
            <person name="Dalin E."/>
            <person name="Tice H."/>
            <person name="Bruce D."/>
            <person name="Goodwin L."/>
            <person name="Pitluck S."/>
            <person name="Chertkov O."/>
            <person name="Brettin T."/>
            <person name="Detter J.C."/>
            <person name="Han C."/>
            <person name="Kuske C.R."/>
            <person name="Schmutz J."/>
            <person name="Larimer F."/>
            <person name="Land M."/>
            <person name="Hauser L."/>
            <person name="Kyrpides N."/>
            <person name="Ivanova N."/>
            <person name="Marx C.J."/>
            <person name="Richardson P."/>
        </authorList>
    </citation>
    <scope>NUCLEOTIDE SEQUENCE [LARGE SCALE GENOMIC DNA]</scope>
    <source>
        <strain>4-46</strain>
    </source>
</reference>
<protein>
    <recommendedName>
        <fullName evidence="1">Sulfate adenylyltransferase subunit 2</fullName>
        <ecNumber evidence="1">2.7.7.4</ecNumber>
    </recommendedName>
    <alternativeName>
        <fullName evidence="1">ATP-sulfurylase small subunit</fullName>
    </alternativeName>
    <alternativeName>
        <fullName evidence="1">Sulfate adenylate transferase</fullName>
        <shortName evidence="1">SAT</shortName>
    </alternativeName>
</protein>
<proteinExistence type="inferred from homology"/>
<gene>
    <name evidence="1" type="primary">cysD</name>
    <name type="ordered locus">M446_5480</name>
</gene>
<dbReference type="EC" id="2.7.7.4" evidence="1"/>
<dbReference type="EMBL" id="CP000943">
    <property type="protein sequence ID" value="ACA19796.1"/>
    <property type="molecule type" value="Genomic_DNA"/>
</dbReference>
<dbReference type="RefSeq" id="WP_012335181.1">
    <property type="nucleotide sequence ID" value="NC_010511.1"/>
</dbReference>
<dbReference type="SMR" id="B0U8Y5"/>
<dbReference type="STRING" id="426117.M446_5480"/>
<dbReference type="KEGG" id="met:M446_5480"/>
<dbReference type="eggNOG" id="COG0175">
    <property type="taxonomic scope" value="Bacteria"/>
</dbReference>
<dbReference type="HOGENOM" id="CLU_043026_0_0_5"/>
<dbReference type="UniPathway" id="UPA00140">
    <property type="reaction ID" value="UER00204"/>
</dbReference>
<dbReference type="GO" id="GO:0005524">
    <property type="term" value="F:ATP binding"/>
    <property type="evidence" value="ECO:0007669"/>
    <property type="project" value="UniProtKB-KW"/>
</dbReference>
<dbReference type="GO" id="GO:0004781">
    <property type="term" value="F:sulfate adenylyltransferase (ATP) activity"/>
    <property type="evidence" value="ECO:0007669"/>
    <property type="project" value="UniProtKB-UniRule"/>
</dbReference>
<dbReference type="GO" id="GO:0070814">
    <property type="term" value="P:hydrogen sulfide biosynthetic process"/>
    <property type="evidence" value="ECO:0007669"/>
    <property type="project" value="UniProtKB-UniRule"/>
</dbReference>
<dbReference type="GO" id="GO:0000103">
    <property type="term" value="P:sulfate assimilation"/>
    <property type="evidence" value="ECO:0007669"/>
    <property type="project" value="UniProtKB-UniRule"/>
</dbReference>
<dbReference type="FunFam" id="3.40.50.620:FF:000002">
    <property type="entry name" value="Sulfate adenylyltransferase subunit 2"/>
    <property type="match status" value="1"/>
</dbReference>
<dbReference type="Gene3D" id="3.40.50.620">
    <property type="entry name" value="HUPs"/>
    <property type="match status" value="1"/>
</dbReference>
<dbReference type="HAMAP" id="MF_00064">
    <property type="entry name" value="Sulf_adenylyltr_sub2"/>
    <property type="match status" value="1"/>
</dbReference>
<dbReference type="InterPro" id="IPR002500">
    <property type="entry name" value="PAPS_reduct_dom"/>
</dbReference>
<dbReference type="InterPro" id="IPR014729">
    <property type="entry name" value="Rossmann-like_a/b/a_fold"/>
</dbReference>
<dbReference type="InterPro" id="IPR011784">
    <property type="entry name" value="SO4_adenylTrfase_ssu"/>
</dbReference>
<dbReference type="InterPro" id="IPR050128">
    <property type="entry name" value="Sulfate_adenylyltrnsfr_sub2"/>
</dbReference>
<dbReference type="NCBIfam" id="TIGR02039">
    <property type="entry name" value="CysD"/>
    <property type="match status" value="1"/>
</dbReference>
<dbReference type="NCBIfam" id="NF003587">
    <property type="entry name" value="PRK05253.1"/>
    <property type="match status" value="1"/>
</dbReference>
<dbReference type="NCBIfam" id="NF009214">
    <property type="entry name" value="PRK12563.1"/>
    <property type="match status" value="1"/>
</dbReference>
<dbReference type="PANTHER" id="PTHR43196">
    <property type="entry name" value="SULFATE ADENYLYLTRANSFERASE SUBUNIT 2"/>
    <property type="match status" value="1"/>
</dbReference>
<dbReference type="PANTHER" id="PTHR43196:SF1">
    <property type="entry name" value="SULFATE ADENYLYLTRANSFERASE SUBUNIT 2"/>
    <property type="match status" value="1"/>
</dbReference>
<dbReference type="Pfam" id="PF01507">
    <property type="entry name" value="PAPS_reduct"/>
    <property type="match status" value="1"/>
</dbReference>
<dbReference type="PIRSF" id="PIRSF002936">
    <property type="entry name" value="CysDAde_trans"/>
    <property type="match status" value="1"/>
</dbReference>
<dbReference type="SUPFAM" id="SSF52402">
    <property type="entry name" value="Adenine nucleotide alpha hydrolases-like"/>
    <property type="match status" value="1"/>
</dbReference>
<comment type="function">
    <text evidence="1">With CysN forms the ATP sulfurylase (ATPS) that catalyzes the adenylation of sulfate producing adenosine 5'-phosphosulfate (APS) and diphosphate, the first enzymatic step in sulfur assimilation pathway. APS synthesis involves the formation of a high-energy phosphoric-sulfuric acid anhydride bond driven by GTP hydrolysis by CysN coupled to ATP hydrolysis by CysD.</text>
</comment>
<comment type="catalytic activity">
    <reaction evidence="1">
        <text>sulfate + ATP + H(+) = adenosine 5'-phosphosulfate + diphosphate</text>
        <dbReference type="Rhea" id="RHEA:18133"/>
        <dbReference type="ChEBI" id="CHEBI:15378"/>
        <dbReference type="ChEBI" id="CHEBI:16189"/>
        <dbReference type="ChEBI" id="CHEBI:30616"/>
        <dbReference type="ChEBI" id="CHEBI:33019"/>
        <dbReference type="ChEBI" id="CHEBI:58243"/>
        <dbReference type="EC" id="2.7.7.4"/>
    </reaction>
</comment>
<comment type="pathway">
    <text evidence="1">Sulfur metabolism; hydrogen sulfide biosynthesis; sulfite from sulfate: step 1/3.</text>
</comment>
<comment type="subunit">
    <text evidence="1">Heterodimer composed of CysD, the smaller subunit, and CysN.</text>
</comment>
<comment type="similarity">
    <text evidence="1">Belongs to the PAPS reductase family. CysD subfamily.</text>
</comment>
<organism>
    <name type="scientific">Methylobacterium sp. (strain 4-46)</name>
    <dbReference type="NCBI Taxonomy" id="426117"/>
    <lineage>
        <taxon>Bacteria</taxon>
        <taxon>Pseudomonadati</taxon>
        <taxon>Pseudomonadota</taxon>
        <taxon>Alphaproteobacteria</taxon>
        <taxon>Hyphomicrobiales</taxon>
        <taxon>Methylobacteriaceae</taxon>
        <taxon>Methylobacterium</taxon>
    </lineage>
</organism>